<proteinExistence type="inferred from homology"/>
<keyword id="KW-0004">4Fe-4S</keyword>
<keyword id="KW-0408">Iron</keyword>
<keyword id="KW-0411">Iron-sulfur</keyword>
<keyword id="KW-0414">Isoprene biosynthesis</keyword>
<keyword id="KW-0479">Metal-binding</keyword>
<keyword id="KW-0560">Oxidoreductase</keyword>
<comment type="function">
    <text evidence="1">Catalyzes the conversion of 1-hydroxy-2-methyl-2-(E)-butenyl 4-diphosphate (HMBPP) into a mixture of isopentenyl diphosphate (IPP) and dimethylallyl diphosphate (DMAPP). Acts in the terminal step of the DOXP/MEP pathway for isoprenoid precursor biosynthesis.</text>
</comment>
<comment type="catalytic activity">
    <reaction evidence="1">
        <text>isopentenyl diphosphate + 2 oxidized [2Fe-2S]-[ferredoxin] + H2O = (2E)-4-hydroxy-3-methylbut-2-enyl diphosphate + 2 reduced [2Fe-2S]-[ferredoxin] + 2 H(+)</text>
        <dbReference type="Rhea" id="RHEA:24488"/>
        <dbReference type="Rhea" id="RHEA-COMP:10000"/>
        <dbReference type="Rhea" id="RHEA-COMP:10001"/>
        <dbReference type="ChEBI" id="CHEBI:15377"/>
        <dbReference type="ChEBI" id="CHEBI:15378"/>
        <dbReference type="ChEBI" id="CHEBI:33737"/>
        <dbReference type="ChEBI" id="CHEBI:33738"/>
        <dbReference type="ChEBI" id="CHEBI:128753"/>
        <dbReference type="ChEBI" id="CHEBI:128769"/>
        <dbReference type="EC" id="1.17.7.4"/>
    </reaction>
</comment>
<comment type="catalytic activity">
    <reaction evidence="1">
        <text>dimethylallyl diphosphate + 2 oxidized [2Fe-2S]-[ferredoxin] + H2O = (2E)-4-hydroxy-3-methylbut-2-enyl diphosphate + 2 reduced [2Fe-2S]-[ferredoxin] + 2 H(+)</text>
        <dbReference type="Rhea" id="RHEA:24825"/>
        <dbReference type="Rhea" id="RHEA-COMP:10000"/>
        <dbReference type="Rhea" id="RHEA-COMP:10001"/>
        <dbReference type="ChEBI" id="CHEBI:15377"/>
        <dbReference type="ChEBI" id="CHEBI:15378"/>
        <dbReference type="ChEBI" id="CHEBI:33737"/>
        <dbReference type="ChEBI" id="CHEBI:33738"/>
        <dbReference type="ChEBI" id="CHEBI:57623"/>
        <dbReference type="ChEBI" id="CHEBI:128753"/>
        <dbReference type="EC" id="1.17.7.4"/>
    </reaction>
</comment>
<comment type="cofactor">
    <cofactor evidence="1">
        <name>[4Fe-4S] cluster</name>
        <dbReference type="ChEBI" id="CHEBI:49883"/>
    </cofactor>
    <text evidence="1">Binds 1 [4Fe-4S] cluster per subunit.</text>
</comment>
<comment type="pathway">
    <text evidence="1">Isoprenoid biosynthesis; dimethylallyl diphosphate biosynthesis; dimethylallyl diphosphate from (2E)-4-hydroxy-3-methylbutenyl diphosphate: step 1/1.</text>
</comment>
<comment type="pathway">
    <text evidence="1">Isoprenoid biosynthesis; isopentenyl diphosphate biosynthesis via DXP pathway; isopentenyl diphosphate from 1-deoxy-D-xylulose 5-phosphate: step 6/6.</text>
</comment>
<comment type="similarity">
    <text evidence="1">Belongs to the IspH family.</text>
</comment>
<reference key="1">
    <citation type="journal article" date="2000" name="Nucleic Acids Res.">
        <title>Genome sequences of Chlamydia trachomatis MoPn and Chlamydia pneumoniae AR39.</title>
        <authorList>
            <person name="Read T.D."/>
            <person name="Brunham R.C."/>
            <person name="Shen C."/>
            <person name="Gill S.R."/>
            <person name="Heidelberg J.F."/>
            <person name="White O."/>
            <person name="Hickey E.K."/>
            <person name="Peterson J.D."/>
            <person name="Utterback T.R."/>
            <person name="Berry K.J."/>
            <person name="Bass S."/>
            <person name="Linher K.D."/>
            <person name="Weidman J.F."/>
            <person name="Khouri H.M."/>
            <person name="Craven B."/>
            <person name="Bowman C."/>
            <person name="Dodson R.J."/>
            <person name="Gwinn M.L."/>
            <person name="Nelson W.C."/>
            <person name="DeBoy R.T."/>
            <person name="Kolonay J.F."/>
            <person name="McClarty G."/>
            <person name="Salzberg S.L."/>
            <person name="Eisen J.A."/>
            <person name="Fraser C.M."/>
        </authorList>
    </citation>
    <scope>NUCLEOTIDE SEQUENCE [LARGE SCALE GENOMIC DNA]</scope>
    <source>
        <strain>MoPn / Nigg</strain>
    </source>
</reference>
<name>ISPH_CHLMU</name>
<sequence length="308" mass="34010">MRKVIICSPRGFCAGVIRAVQTVERALEKWGAPIYVKHEIVHNRHVVDKLRAKGAIFIEDLQEVPCNSRVIYSAHGVPPSVREEAKERGLITIDATCGLVTKIHSAVKMYARRGYLIILIGKRKHVEVIGICGEAPDKITVVENIAEVEALTFSTKDLLFYVTQTTLSMDDSADMIAALKARYPQIITLPSSSICYATQNRQSALRNILPKVEFVYVIGDPKSSNSNQLKAVAARRGVVARLVNNPEEITDEILQYSGNIGVTAGASTPEDVVQACLTKLQKLIPTLVVETDLFVEEDTIFQLPKELQ</sequence>
<gene>
    <name evidence="1" type="primary">ispH</name>
    <name type="synonym">lytB</name>
    <name type="ordered locus">TC_0249</name>
</gene>
<protein>
    <recommendedName>
        <fullName evidence="1">4-hydroxy-3-methylbut-2-enyl diphosphate reductase</fullName>
        <shortName evidence="1">HMBPP reductase</shortName>
        <ecNumber evidence="1">1.17.7.4</ecNumber>
    </recommendedName>
</protein>
<organism>
    <name type="scientific">Chlamydia muridarum (strain MoPn / Nigg)</name>
    <dbReference type="NCBI Taxonomy" id="243161"/>
    <lineage>
        <taxon>Bacteria</taxon>
        <taxon>Pseudomonadati</taxon>
        <taxon>Chlamydiota</taxon>
        <taxon>Chlamydiia</taxon>
        <taxon>Chlamydiales</taxon>
        <taxon>Chlamydiaceae</taxon>
        <taxon>Chlamydia/Chlamydophila group</taxon>
        <taxon>Chlamydia</taxon>
    </lineage>
</organism>
<feature type="chain" id="PRO_0000128800" description="4-hydroxy-3-methylbut-2-enyl diphosphate reductase">
    <location>
        <begin position="1"/>
        <end position="308"/>
    </location>
</feature>
<feature type="active site" description="Proton donor" evidence="1">
    <location>
        <position position="127"/>
    </location>
</feature>
<feature type="binding site" evidence="1">
    <location>
        <position position="13"/>
    </location>
    <ligand>
        <name>[4Fe-4S] cluster</name>
        <dbReference type="ChEBI" id="CHEBI:49883"/>
    </ligand>
</feature>
<feature type="binding site" evidence="1">
    <location>
        <position position="42"/>
    </location>
    <ligand>
        <name>(2E)-4-hydroxy-3-methylbut-2-enyl diphosphate</name>
        <dbReference type="ChEBI" id="CHEBI:128753"/>
    </ligand>
</feature>
<feature type="binding site" evidence="1">
    <location>
        <position position="42"/>
    </location>
    <ligand>
        <name>dimethylallyl diphosphate</name>
        <dbReference type="ChEBI" id="CHEBI:57623"/>
    </ligand>
</feature>
<feature type="binding site" evidence="1">
    <location>
        <position position="42"/>
    </location>
    <ligand>
        <name>isopentenyl diphosphate</name>
        <dbReference type="ChEBI" id="CHEBI:128769"/>
    </ligand>
</feature>
<feature type="binding site" evidence="1">
    <location>
        <position position="75"/>
    </location>
    <ligand>
        <name>(2E)-4-hydroxy-3-methylbut-2-enyl diphosphate</name>
        <dbReference type="ChEBI" id="CHEBI:128753"/>
    </ligand>
</feature>
<feature type="binding site" evidence="1">
    <location>
        <position position="75"/>
    </location>
    <ligand>
        <name>dimethylallyl diphosphate</name>
        <dbReference type="ChEBI" id="CHEBI:57623"/>
    </ligand>
</feature>
<feature type="binding site" evidence="1">
    <location>
        <position position="75"/>
    </location>
    <ligand>
        <name>isopentenyl diphosphate</name>
        <dbReference type="ChEBI" id="CHEBI:128769"/>
    </ligand>
</feature>
<feature type="binding site" evidence="1">
    <location>
        <position position="97"/>
    </location>
    <ligand>
        <name>[4Fe-4S] cluster</name>
        <dbReference type="ChEBI" id="CHEBI:49883"/>
    </ligand>
</feature>
<feature type="binding site" evidence="1">
    <location>
        <position position="125"/>
    </location>
    <ligand>
        <name>(2E)-4-hydroxy-3-methylbut-2-enyl diphosphate</name>
        <dbReference type="ChEBI" id="CHEBI:128753"/>
    </ligand>
</feature>
<feature type="binding site" evidence="1">
    <location>
        <position position="125"/>
    </location>
    <ligand>
        <name>dimethylallyl diphosphate</name>
        <dbReference type="ChEBI" id="CHEBI:57623"/>
    </ligand>
</feature>
<feature type="binding site" evidence="1">
    <location>
        <position position="125"/>
    </location>
    <ligand>
        <name>isopentenyl diphosphate</name>
        <dbReference type="ChEBI" id="CHEBI:128769"/>
    </ligand>
</feature>
<feature type="binding site" evidence="1">
    <location>
        <position position="165"/>
    </location>
    <ligand>
        <name>(2E)-4-hydroxy-3-methylbut-2-enyl diphosphate</name>
        <dbReference type="ChEBI" id="CHEBI:128753"/>
    </ligand>
</feature>
<feature type="binding site" evidence="1">
    <location>
        <position position="195"/>
    </location>
    <ligand>
        <name>[4Fe-4S] cluster</name>
        <dbReference type="ChEBI" id="CHEBI:49883"/>
    </ligand>
</feature>
<feature type="binding site" evidence="1">
    <location>
        <position position="223"/>
    </location>
    <ligand>
        <name>(2E)-4-hydroxy-3-methylbut-2-enyl diphosphate</name>
        <dbReference type="ChEBI" id="CHEBI:128753"/>
    </ligand>
</feature>
<feature type="binding site" evidence="1">
    <location>
        <position position="223"/>
    </location>
    <ligand>
        <name>dimethylallyl diphosphate</name>
        <dbReference type="ChEBI" id="CHEBI:57623"/>
    </ligand>
</feature>
<feature type="binding site" evidence="1">
    <location>
        <position position="223"/>
    </location>
    <ligand>
        <name>isopentenyl diphosphate</name>
        <dbReference type="ChEBI" id="CHEBI:128769"/>
    </ligand>
</feature>
<feature type="binding site" evidence="1">
    <location>
        <position position="224"/>
    </location>
    <ligand>
        <name>(2E)-4-hydroxy-3-methylbut-2-enyl diphosphate</name>
        <dbReference type="ChEBI" id="CHEBI:128753"/>
    </ligand>
</feature>
<feature type="binding site" evidence="1">
    <location>
        <position position="224"/>
    </location>
    <ligand>
        <name>dimethylallyl diphosphate</name>
        <dbReference type="ChEBI" id="CHEBI:57623"/>
    </ligand>
</feature>
<feature type="binding site" evidence="1">
    <location>
        <position position="224"/>
    </location>
    <ligand>
        <name>isopentenyl diphosphate</name>
        <dbReference type="ChEBI" id="CHEBI:128769"/>
    </ligand>
</feature>
<feature type="binding site" evidence="1">
    <location>
        <position position="225"/>
    </location>
    <ligand>
        <name>(2E)-4-hydroxy-3-methylbut-2-enyl diphosphate</name>
        <dbReference type="ChEBI" id="CHEBI:128753"/>
    </ligand>
</feature>
<feature type="binding site" evidence="1">
    <location>
        <position position="225"/>
    </location>
    <ligand>
        <name>dimethylallyl diphosphate</name>
        <dbReference type="ChEBI" id="CHEBI:57623"/>
    </ligand>
</feature>
<feature type="binding site" evidence="1">
    <location>
        <position position="225"/>
    </location>
    <ligand>
        <name>isopentenyl diphosphate</name>
        <dbReference type="ChEBI" id="CHEBI:128769"/>
    </ligand>
</feature>
<feature type="binding site" evidence="1">
    <location>
        <position position="267"/>
    </location>
    <ligand>
        <name>(2E)-4-hydroxy-3-methylbut-2-enyl diphosphate</name>
        <dbReference type="ChEBI" id="CHEBI:128753"/>
    </ligand>
</feature>
<feature type="binding site" evidence="1">
    <location>
        <position position="267"/>
    </location>
    <ligand>
        <name>dimethylallyl diphosphate</name>
        <dbReference type="ChEBI" id="CHEBI:57623"/>
    </ligand>
</feature>
<feature type="binding site" evidence="1">
    <location>
        <position position="267"/>
    </location>
    <ligand>
        <name>isopentenyl diphosphate</name>
        <dbReference type="ChEBI" id="CHEBI:128769"/>
    </ligand>
</feature>
<dbReference type="EC" id="1.17.7.4" evidence="1"/>
<dbReference type="EMBL" id="AE002160">
    <property type="protein sequence ID" value="AAF39118.1"/>
    <property type="molecule type" value="Genomic_DNA"/>
</dbReference>
<dbReference type="PIR" id="C81723">
    <property type="entry name" value="C81723"/>
</dbReference>
<dbReference type="RefSeq" id="WP_010229942.1">
    <property type="nucleotide sequence ID" value="NZ_CP063055.1"/>
</dbReference>
<dbReference type="SMR" id="Q9PL59"/>
<dbReference type="GeneID" id="1246418"/>
<dbReference type="KEGG" id="cmu:TC_0249"/>
<dbReference type="eggNOG" id="COG0761">
    <property type="taxonomic scope" value="Bacteria"/>
</dbReference>
<dbReference type="HOGENOM" id="CLU_027486_1_0_0"/>
<dbReference type="OrthoDB" id="9777362at2"/>
<dbReference type="UniPathway" id="UPA00056">
    <property type="reaction ID" value="UER00097"/>
</dbReference>
<dbReference type="UniPathway" id="UPA00059">
    <property type="reaction ID" value="UER00105"/>
</dbReference>
<dbReference type="Proteomes" id="UP000000800">
    <property type="component" value="Chromosome"/>
</dbReference>
<dbReference type="GO" id="GO:0051539">
    <property type="term" value="F:4 iron, 4 sulfur cluster binding"/>
    <property type="evidence" value="ECO:0007669"/>
    <property type="project" value="UniProtKB-UniRule"/>
</dbReference>
<dbReference type="GO" id="GO:0051745">
    <property type="term" value="F:4-hydroxy-3-methylbut-2-enyl diphosphate reductase activity"/>
    <property type="evidence" value="ECO:0007669"/>
    <property type="project" value="UniProtKB-UniRule"/>
</dbReference>
<dbReference type="GO" id="GO:0046872">
    <property type="term" value="F:metal ion binding"/>
    <property type="evidence" value="ECO:0007669"/>
    <property type="project" value="UniProtKB-KW"/>
</dbReference>
<dbReference type="GO" id="GO:0050992">
    <property type="term" value="P:dimethylallyl diphosphate biosynthetic process"/>
    <property type="evidence" value="ECO:0007669"/>
    <property type="project" value="UniProtKB-UniRule"/>
</dbReference>
<dbReference type="GO" id="GO:0019288">
    <property type="term" value="P:isopentenyl diphosphate biosynthetic process, methylerythritol 4-phosphate pathway"/>
    <property type="evidence" value="ECO:0007669"/>
    <property type="project" value="UniProtKB-UniRule"/>
</dbReference>
<dbReference type="GO" id="GO:0016114">
    <property type="term" value="P:terpenoid biosynthetic process"/>
    <property type="evidence" value="ECO:0007669"/>
    <property type="project" value="UniProtKB-UniRule"/>
</dbReference>
<dbReference type="CDD" id="cd13944">
    <property type="entry name" value="lytB_ispH"/>
    <property type="match status" value="1"/>
</dbReference>
<dbReference type="Gene3D" id="3.40.50.11270">
    <property type="match status" value="1"/>
</dbReference>
<dbReference type="Gene3D" id="3.40.1010.20">
    <property type="entry name" value="4-hydroxy-3-methylbut-2-enyl diphosphate reductase, catalytic domain"/>
    <property type="match status" value="2"/>
</dbReference>
<dbReference type="HAMAP" id="MF_00191">
    <property type="entry name" value="IspH"/>
    <property type="match status" value="1"/>
</dbReference>
<dbReference type="InterPro" id="IPR003451">
    <property type="entry name" value="LytB/IspH"/>
</dbReference>
<dbReference type="NCBIfam" id="TIGR00216">
    <property type="entry name" value="ispH_lytB"/>
    <property type="match status" value="1"/>
</dbReference>
<dbReference type="NCBIfam" id="NF002190">
    <property type="entry name" value="PRK01045.1-4"/>
    <property type="match status" value="1"/>
</dbReference>
<dbReference type="PANTHER" id="PTHR30426">
    <property type="entry name" value="4-HYDROXY-3-METHYLBUT-2-ENYL DIPHOSPHATE REDUCTASE"/>
    <property type="match status" value="1"/>
</dbReference>
<dbReference type="PANTHER" id="PTHR30426:SF0">
    <property type="entry name" value="4-HYDROXY-3-METHYLBUT-2-ENYL DIPHOSPHATE REDUCTASE"/>
    <property type="match status" value="1"/>
</dbReference>
<dbReference type="Pfam" id="PF02401">
    <property type="entry name" value="LYTB"/>
    <property type="match status" value="1"/>
</dbReference>
<accession>Q9PL59</accession>
<evidence type="ECO:0000255" key="1">
    <source>
        <dbReference type="HAMAP-Rule" id="MF_00191"/>
    </source>
</evidence>